<evidence type="ECO:0000255" key="1">
    <source>
        <dbReference type="HAMAP-Rule" id="MF_01870"/>
    </source>
</evidence>
<dbReference type="EC" id="3.5.1.n3" evidence="1"/>
<dbReference type="EMBL" id="CU928158">
    <property type="protein sequence ID" value="CAQ88448.1"/>
    <property type="molecule type" value="Genomic_DNA"/>
</dbReference>
<dbReference type="RefSeq" id="WP_000169755.1">
    <property type="nucleotide sequence ID" value="NC_011740.1"/>
</dbReference>
<dbReference type="SMR" id="B7LM75"/>
<dbReference type="GeneID" id="75058028"/>
<dbReference type="KEGG" id="efe:EFER_0913"/>
<dbReference type="HOGENOM" id="CLU_084199_0_0_6"/>
<dbReference type="OrthoDB" id="5589314at2"/>
<dbReference type="UniPathway" id="UPA00030"/>
<dbReference type="UniPathway" id="UPA00036">
    <property type="reaction ID" value="UER00496"/>
</dbReference>
<dbReference type="Proteomes" id="UP000000745">
    <property type="component" value="Chromosome"/>
</dbReference>
<dbReference type="GO" id="GO:0016020">
    <property type="term" value="C:membrane"/>
    <property type="evidence" value="ECO:0007669"/>
    <property type="project" value="GOC"/>
</dbReference>
<dbReference type="GO" id="GO:0016811">
    <property type="term" value="F:hydrolase activity, acting on carbon-nitrogen (but not peptide) bonds, in linear amides"/>
    <property type="evidence" value="ECO:0007669"/>
    <property type="project" value="UniProtKB-UniRule"/>
</dbReference>
<dbReference type="GO" id="GO:0036108">
    <property type="term" value="P:4-amino-4-deoxy-alpha-L-arabinopyranosyl undecaprenyl phosphate biosynthetic process"/>
    <property type="evidence" value="ECO:0007669"/>
    <property type="project" value="UniProtKB-UniRule"/>
</dbReference>
<dbReference type="GO" id="GO:0009245">
    <property type="term" value="P:lipid A biosynthetic process"/>
    <property type="evidence" value="ECO:0007669"/>
    <property type="project" value="UniProtKB-UniRule"/>
</dbReference>
<dbReference type="GO" id="GO:0009103">
    <property type="term" value="P:lipopolysaccharide biosynthetic process"/>
    <property type="evidence" value="ECO:0007669"/>
    <property type="project" value="UniProtKB-UniRule"/>
</dbReference>
<dbReference type="GO" id="GO:0046677">
    <property type="term" value="P:response to antibiotic"/>
    <property type="evidence" value="ECO:0007669"/>
    <property type="project" value="UniProtKB-KW"/>
</dbReference>
<dbReference type="CDD" id="cd10939">
    <property type="entry name" value="CE4_ArnD"/>
    <property type="match status" value="1"/>
</dbReference>
<dbReference type="Gene3D" id="3.20.20.370">
    <property type="entry name" value="Glycoside hydrolase/deacetylase"/>
    <property type="match status" value="1"/>
</dbReference>
<dbReference type="HAMAP" id="MF_01870">
    <property type="entry name" value="ArnD"/>
    <property type="match status" value="1"/>
</dbReference>
<dbReference type="InterPro" id="IPR023557">
    <property type="entry name" value="ArnD"/>
</dbReference>
<dbReference type="InterPro" id="IPR011330">
    <property type="entry name" value="Glyco_hydro/deAcase_b/a-brl"/>
</dbReference>
<dbReference type="InterPro" id="IPR002509">
    <property type="entry name" value="NODB_dom"/>
</dbReference>
<dbReference type="InterPro" id="IPR050248">
    <property type="entry name" value="Polysacc_deacetylase_ArnD"/>
</dbReference>
<dbReference type="NCBIfam" id="NF011923">
    <property type="entry name" value="PRK15394.1"/>
    <property type="match status" value="1"/>
</dbReference>
<dbReference type="PANTHER" id="PTHR10587:SF137">
    <property type="entry name" value="4-DEOXY-4-FORMAMIDO-L-ARABINOSE-PHOSPHOUNDECAPRENOL DEFORMYLASE ARND-RELATED"/>
    <property type="match status" value="1"/>
</dbReference>
<dbReference type="PANTHER" id="PTHR10587">
    <property type="entry name" value="GLYCOSYL TRANSFERASE-RELATED"/>
    <property type="match status" value="1"/>
</dbReference>
<dbReference type="Pfam" id="PF01522">
    <property type="entry name" value="Polysacc_deac_1"/>
    <property type="match status" value="1"/>
</dbReference>
<dbReference type="SUPFAM" id="SSF88713">
    <property type="entry name" value="Glycoside hydrolase/deacetylase"/>
    <property type="match status" value="1"/>
</dbReference>
<dbReference type="PROSITE" id="PS51677">
    <property type="entry name" value="NODB"/>
    <property type="match status" value="1"/>
</dbReference>
<protein>
    <recommendedName>
        <fullName evidence="1">Probable 4-deoxy-4-formamido-L-arabinose-phosphoundecaprenol deformylase ArnD</fullName>
        <ecNumber evidence="1">3.5.1.n3</ecNumber>
    </recommendedName>
</protein>
<organism>
    <name type="scientific">Escherichia fergusonii (strain ATCC 35469 / DSM 13698 / CCUG 18766 / IAM 14443 / JCM 21226 / LMG 7866 / NBRC 102419 / NCTC 12128 / CDC 0568-73)</name>
    <dbReference type="NCBI Taxonomy" id="585054"/>
    <lineage>
        <taxon>Bacteria</taxon>
        <taxon>Pseudomonadati</taxon>
        <taxon>Pseudomonadota</taxon>
        <taxon>Gammaproteobacteria</taxon>
        <taxon>Enterobacterales</taxon>
        <taxon>Enterobacteriaceae</taxon>
        <taxon>Escherichia</taxon>
    </lineage>
</organism>
<reference key="1">
    <citation type="journal article" date="2009" name="PLoS Genet.">
        <title>Organised genome dynamics in the Escherichia coli species results in highly diverse adaptive paths.</title>
        <authorList>
            <person name="Touchon M."/>
            <person name="Hoede C."/>
            <person name="Tenaillon O."/>
            <person name="Barbe V."/>
            <person name="Baeriswyl S."/>
            <person name="Bidet P."/>
            <person name="Bingen E."/>
            <person name="Bonacorsi S."/>
            <person name="Bouchier C."/>
            <person name="Bouvet O."/>
            <person name="Calteau A."/>
            <person name="Chiapello H."/>
            <person name="Clermont O."/>
            <person name="Cruveiller S."/>
            <person name="Danchin A."/>
            <person name="Diard M."/>
            <person name="Dossat C."/>
            <person name="Karoui M.E."/>
            <person name="Frapy E."/>
            <person name="Garry L."/>
            <person name="Ghigo J.M."/>
            <person name="Gilles A.M."/>
            <person name="Johnson J."/>
            <person name="Le Bouguenec C."/>
            <person name="Lescat M."/>
            <person name="Mangenot S."/>
            <person name="Martinez-Jehanne V."/>
            <person name="Matic I."/>
            <person name="Nassif X."/>
            <person name="Oztas S."/>
            <person name="Petit M.A."/>
            <person name="Pichon C."/>
            <person name="Rouy Z."/>
            <person name="Ruf C.S."/>
            <person name="Schneider D."/>
            <person name="Tourret J."/>
            <person name="Vacherie B."/>
            <person name="Vallenet D."/>
            <person name="Medigue C."/>
            <person name="Rocha E.P.C."/>
            <person name="Denamur E."/>
        </authorList>
    </citation>
    <scope>NUCLEOTIDE SEQUENCE [LARGE SCALE GENOMIC DNA]</scope>
    <source>
        <strain>ATCC 35469 / DSM 13698 / BCRC 15582 / CCUG 18766 / IAM 14443 / JCM 21226 / LMG 7866 / NBRC 102419 / NCTC 12128 / CDC 0568-73</strain>
    </source>
</reference>
<feature type="chain" id="PRO_0000383514" description="Probable 4-deoxy-4-formamido-L-arabinose-phosphoundecaprenol deformylase ArnD">
    <location>
        <begin position="1"/>
        <end position="300"/>
    </location>
</feature>
<feature type="domain" description="NodB homology" evidence="1">
    <location>
        <begin position="2"/>
        <end position="260"/>
    </location>
</feature>
<sequence>MTKVGLRIDVDTFRGTREGVPRLLETLDKHNIQASFFFSVGPDNMGRHLWRLVKPQFLWKMLRSNAASLYGWDILLAGTAWAGKEIGKANAAIIREAAKHHEIGLHAWDHHAWQTHSGNWDQQTLVNDIARGLRVLEEIIGQPVSCSAVAGWRADQQVVEAKEFFHLRYNSDCRGTMPFRPQLESGKSGTPQIPVTLPTWDEVVGREVKTADFNGWLLNRILRDRGTPVYTIHAEVEGCAYHLDFVDLLKRAAREGITFCPLSELLPATQDALPLGEIVRGHIAGREGWLGCQQCVSLSQ</sequence>
<comment type="function">
    <text evidence="1">Catalyzes the deformylation of 4-deoxy-4-formamido-L-arabinose-phosphoundecaprenol to 4-amino-4-deoxy-L-arabinose-phosphoundecaprenol. The modified arabinose is attached to lipid A and is required for resistance to polymyxin and cationic antimicrobial peptides.</text>
</comment>
<comment type="catalytic activity">
    <reaction evidence="1">
        <text>4-deoxy-4-formamido-alpha-L-arabinopyranosyl di-trans,octa-cis-undecaprenyl phosphate + H2O = 4-amino-4-deoxy-alpha-L-arabinopyranosyl di-trans,octa-cis-undecaprenyl phosphate + formate</text>
        <dbReference type="Rhea" id="RHEA:27734"/>
        <dbReference type="ChEBI" id="CHEBI:15377"/>
        <dbReference type="ChEBI" id="CHEBI:15740"/>
        <dbReference type="ChEBI" id="CHEBI:58909"/>
        <dbReference type="ChEBI" id="CHEBI:60463"/>
        <dbReference type="EC" id="3.5.1.n3"/>
    </reaction>
</comment>
<comment type="pathway">
    <text evidence="1">Glycolipid biosynthesis; 4-amino-4-deoxy-alpha-L-arabinose undecaprenyl phosphate biosynthesis; 4-amino-4-deoxy-alpha-L-arabinose undecaprenyl phosphate from UDP-4-deoxy-4-formamido-beta-L-arabinose and undecaprenyl phosphate: step 2/2.</text>
</comment>
<comment type="pathway">
    <text evidence="1">Bacterial outer membrane biogenesis; lipopolysaccharide biosynthesis.</text>
</comment>
<comment type="similarity">
    <text evidence="1">Belongs to the polysaccharide deacetylase family. ArnD deformylase subfamily.</text>
</comment>
<accession>B7LM75</accession>
<gene>
    <name evidence="1" type="primary">arnD</name>
    <name type="ordered locus">EFER_0913</name>
</gene>
<proteinExistence type="inferred from homology"/>
<name>ARND_ESCF3</name>
<keyword id="KW-0046">Antibiotic resistance</keyword>
<keyword id="KW-0378">Hydrolase</keyword>
<keyword id="KW-0441">Lipid A biosynthesis</keyword>
<keyword id="KW-0444">Lipid biosynthesis</keyword>
<keyword id="KW-0443">Lipid metabolism</keyword>
<keyword id="KW-0448">Lipopolysaccharide biosynthesis</keyword>